<name>GCH1_PECCP</name>
<comment type="catalytic activity">
    <reaction evidence="1">
        <text>GTP + H2O = 7,8-dihydroneopterin 3'-triphosphate + formate + H(+)</text>
        <dbReference type="Rhea" id="RHEA:17473"/>
        <dbReference type="ChEBI" id="CHEBI:15377"/>
        <dbReference type="ChEBI" id="CHEBI:15378"/>
        <dbReference type="ChEBI" id="CHEBI:15740"/>
        <dbReference type="ChEBI" id="CHEBI:37565"/>
        <dbReference type="ChEBI" id="CHEBI:58462"/>
        <dbReference type="EC" id="3.5.4.16"/>
    </reaction>
</comment>
<comment type="pathway">
    <text evidence="1">Cofactor biosynthesis; 7,8-dihydroneopterin triphosphate biosynthesis; 7,8-dihydroneopterin triphosphate from GTP: step 1/1.</text>
</comment>
<comment type="subunit">
    <text evidence="1">Homomer.</text>
</comment>
<comment type="similarity">
    <text evidence="1">Belongs to the GTP cyclohydrolase I family.</text>
</comment>
<reference key="1">
    <citation type="submission" date="2009-07" db="EMBL/GenBank/DDBJ databases">
        <title>Complete sequence of Pectobacterium carotovorum subsp. carotovorum PC1.</title>
        <authorList>
            <consortium name="US DOE Joint Genome Institute"/>
            <person name="Lucas S."/>
            <person name="Copeland A."/>
            <person name="Lapidus A."/>
            <person name="Glavina del Rio T."/>
            <person name="Tice H."/>
            <person name="Bruce D."/>
            <person name="Goodwin L."/>
            <person name="Pitluck S."/>
            <person name="Munk A.C."/>
            <person name="Brettin T."/>
            <person name="Detter J.C."/>
            <person name="Han C."/>
            <person name="Tapia R."/>
            <person name="Larimer F."/>
            <person name="Land M."/>
            <person name="Hauser L."/>
            <person name="Kyrpides N."/>
            <person name="Mikhailova N."/>
            <person name="Balakrishnan V."/>
            <person name="Glasner J."/>
            <person name="Perna N.T."/>
        </authorList>
    </citation>
    <scope>NUCLEOTIDE SEQUENCE [LARGE SCALE GENOMIC DNA]</scope>
    <source>
        <strain>PC1</strain>
    </source>
</reference>
<feature type="chain" id="PRO_1000204291" description="GTP cyclohydrolase 1">
    <location>
        <begin position="1"/>
        <end position="220"/>
    </location>
</feature>
<feature type="binding site" evidence="1">
    <location>
        <position position="109"/>
    </location>
    <ligand>
        <name>Zn(2+)</name>
        <dbReference type="ChEBI" id="CHEBI:29105"/>
    </ligand>
</feature>
<feature type="binding site" evidence="1">
    <location>
        <position position="112"/>
    </location>
    <ligand>
        <name>Zn(2+)</name>
        <dbReference type="ChEBI" id="CHEBI:29105"/>
    </ligand>
</feature>
<feature type="binding site" evidence="1">
    <location>
        <position position="180"/>
    </location>
    <ligand>
        <name>Zn(2+)</name>
        <dbReference type="ChEBI" id="CHEBI:29105"/>
    </ligand>
</feature>
<organism>
    <name type="scientific">Pectobacterium carotovorum subsp. carotovorum (strain PC1)</name>
    <dbReference type="NCBI Taxonomy" id="561230"/>
    <lineage>
        <taxon>Bacteria</taxon>
        <taxon>Pseudomonadati</taxon>
        <taxon>Pseudomonadota</taxon>
        <taxon>Gammaproteobacteria</taxon>
        <taxon>Enterobacterales</taxon>
        <taxon>Pectobacteriaceae</taxon>
        <taxon>Pectobacterium</taxon>
    </lineage>
</organism>
<protein>
    <recommendedName>
        <fullName evidence="1">GTP cyclohydrolase 1</fullName>
        <ecNumber evidence="1">3.5.4.16</ecNumber>
    </recommendedName>
    <alternativeName>
        <fullName evidence="1">GTP cyclohydrolase I</fullName>
        <shortName evidence="1">GTP-CH-I</shortName>
    </alternativeName>
</protein>
<gene>
    <name evidence="1" type="primary">folE</name>
    <name type="ordered locus">PC1_1670</name>
</gene>
<sequence length="220" mass="24570">MSSLSKEAVMVHEALLARGLETPLRGALLDRDTRKQRIAEHMTEIMNLLSLDLSDDSLAETPTRIAKMYVDEIFSGLDYANFPKITIIENKMKVDEMVTVRDITLTSTCEHHFVTIDGKATVAYIPKDGVIGLSKLNRIVQFFSQRPQVQERLTQQILVALQTLLGTNNVAVSIDAVHYCVKARGIRDATSATTTTSLGGLFKSSQNTRQEFLRAVRHHN</sequence>
<dbReference type="EC" id="3.5.4.16" evidence="1"/>
<dbReference type="EMBL" id="CP001657">
    <property type="protein sequence ID" value="ACT12711.1"/>
    <property type="molecule type" value="Genomic_DNA"/>
</dbReference>
<dbReference type="RefSeq" id="WP_005967317.1">
    <property type="nucleotide sequence ID" value="NC_012917.1"/>
</dbReference>
<dbReference type="SMR" id="C6DEM6"/>
<dbReference type="STRING" id="561230.PC1_1670"/>
<dbReference type="GeneID" id="90763075"/>
<dbReference type="KEGG" id="pct:PC1_1670"/>
<dbReference type="eggNOG" id="COG0302">
    <property type="taxonomic scope" value="Bacteria"/>
</dbReference>
<dbReference type="HOGENOM" id="CLU_049768_3_2_6"/>
<dbReference type="OrthoDB" id="9801207at2"/>
<dbReference type="UniPathway" id="UPA00848">
    <property type="reaction ID" value="UER00151"/>
</dbReference>
<dbReference type="Proteomes" id="UP000002736">
    <property type="component" value="Chromosome"/>
</dbReference>
<dbReference type="GO" id="GO:0005737">
    <property type="term" value="C:cytoplasm"/>
    <property type="evidence" value="ECO:0007669"/>
    <property type="project" value="TreeGrafter"/>
</dbReference>
<dbReference type="GO" id="GO:0005525">
    <property type="term" value="F:GTP binding"/>
    <property type="evidence" value="ECO:0007669"/>
    <property type="project" value="UniProtKB-KW"/>
</dbReference>
<dbReference type="GO" id="GO:0003934">
    <property type="term" value="F:GTP cyclohydrolase I activity"/>
    <property type="evidence" value="ECO:0007669"/>
    <property type="project" value="UniProtKB-UniRule"/>
</dbReference>
<dbReference type="GO" id="GO:0008270">
    <property type="term" value="F:zinc ion binding"/>
    <property type="evidence" value="ECO:0007669"/>
    <property type="project" value="UniProtKB-UniRule"/>
</dbReference>
<dbReference type="GO" id="GO:0006730">
    <property type="term" value="P:one-carbon metabolic process"/>
    <property type="evidence" value="ECO:0007669"/>
    <property type="project" value="UniProtKB-UniRule"/>
</dbReference>
<dbReference type="GO" id="GO:0006729">
    <property type="term" value="P:tetrahydrobiopterin biosynthetic process"/>
    <property type="evidence" value="ECO:0007669"/>
    <property type="project" value="TreeGrafter"/>
</dbReference>
<dbReference type="GO" id="GO:0046654">
    <property type="term" value="P:tetrahydrofolate biosynthetic process"/>
    <property type="evidence" value="ECO:0007669"/>
    <property type="project" value="UniProtKB-UniRule"/>
</dbReference>
<dbReference type="FunFam" id="1.10.286.10:FF:000002">
    <property type="entry name" value="GTP cyclohydrolase 1"/>
    <property type="match status" value="1"/>
</dbReference>
<dbReference type="FunFam" id="3.30.1130.10:FF:000001">
    <property type="entry name" value="GTP cyclohydrolase 1"/>
    <property type="match status" value="1"/>
</dbReference>
<dbReference type="Gene3D" id="1.10.286.10">
    <property type="match status" value="1"/>
</dbReference>
<dbReference type="Gene3D" id="3.30.1130.10">
    <property type="match status" value="1"/>
</dbReference>
<dbReference type="HAMAP" id="MF_00223">
    <property type="entry name" value="FolE"/>
    <property type="match status" value="1"/>
</dbReference>
<dbReference type="InterPro" id="IPR043133">
    <property type="entry name" value="GTP-CH-I_C/QueF"/>
</dbReference>
<dbReference type="InterPro" id="IPR043134">
    <property type="entry name" value="GTP-CH-I_N"/>
</dbReference>
<dbReference type="InterPro" id="IPR001474">
    <property type="entry name" value="GTP_CycHdrlase_I"/>
</dbReference>
<dbReference type="InterPro" id="IPR018234">
    <property type="entry name" value="GTP_CycHdrlase_I_CS"/>
</dbReference>
<dbReference type="InterPro" id="IPR020602">
    <property type="entry name" value="GTP_CycHdrlase_I_dom"/>
</dbReference>
<dbReference type="NCBIfam" id="TIGR00063">
    <property type="entry name" value="folE"/>
    <property type="match status" value="1"/>
</dbReference>
<dbReference type="NCBIfam" id="NF006824">
    <property type="entry name" value="PRK09347.1-1"/>
    <property type="match status" value="1"/>
</dbReference>
<dbReference type="NCBIfam" id="NF006826">
    <property type="entry name" value="PRK09347.1-3"/>
    <property type="match status" value="1"/>
</dbReference>
<dbReference type="PANTHER" id="PTHR11109:SF7">
    <property type="entry name" value="GTP CYCLOHYDROLASE 1"/>
    <property type="match status" value="1"/>
</dbReference>
<dbReference type="PANTHER" id="PTHR11109">
    <property type="entry name" value="GTP CYCLOHYDROLASE I"/>
    <property type="match status" value="1"/>
</dbReference>
<dbReference type="Pfam" id="PF01227">
    <property type="entry name" value="GTP_cyclohydroI"/>
    <property type="match status" value="1"/>
</dbReference>
<dbReference type="SUPFAM" id="SSF55620">
    <property type="entry name" value="Tetrahydrobiopterin biosynthesis enzymes-like"/>
    <property type="match status" value="1"/>
</dbReference>
<dbReference type="PROSITE" id="PS00859">
    <property type="entry name" value="GTP_CYCLOHYDROL_1_1"/>
    <property type="match status" value="1"/>
</dbReference>
<dbReference type="PROSITE" id="PS00860">
    <property type="entry name" value="GTP_CYCLOHYDROL_1_2"/>
    <property type="match status" value="1"/>
</dbReference>
<accession>C6DEM6</accession>
<evidence type="ECO:0000255" key="1">
    <source>
        <dbReference type="HAMAP-Rule" id="MF_00223"/>
    </source>
</evidence>
<proteinExistence type="inferred from homology"/>
<keyword id="KW-0342">GTP-binding</keyword>
<keyword id="KW-0378">Hydrolase</keyword>
<keyword id="KW-0479">Metal-binding</keyword>
<keyword id="KW-0547">Nucleotide-binding</keyword>
<keyword id="KW-0554">One-carbon metabolism</keyword>
<keyword id="KW-0862">Zinc</keyword>